<keyword id="KW-0119">Carbohydrate metabolism</keyword>
<keyword id="KW-0903">Direct protein sequencing</keyword>
<keyword id="KW-0326">Glycosidase</keyword>
<keyword id="KW-0378">Hydrolase</keyword>
<keyword id="KW-0624">Polysaccharide degradation</keyword>
<keyword id="KW-0858">Xylan degradation</keyword>
<feature type="initiator methionine" description="Removed" evidence="1">
    <location>
        <position position="1"/>
    </location>
</feature>
<feature type="chain" id="PRO_0000012218" description="Beta-xylosidase">
    <location>
        <begin position="2"/>
        <end position="705"/>
    </location>
</feature>
<evidence type="ECO:0000269" key="1">
    <source>
    </source>
</evidence>
<evidence type="ECO:0000305" key="2"/>
<accession>P45702</accession>
<comment type="catalytic activity">
    <reaction>
        <text>Hydrolysis of (1-&gt;4)-beta-D-xylans, to remove successive D-xylose residues from the non-reducing termini.</text>
        <dbReference type="EC" id="3.2.1.37"/>
    </reaction>
</comment>
<comment type="pathway">
    <text>Glycan degradation; xylan degradation.</text>
</comment>
<comment type="induction">
    <text>By xylan and xylose.</text>
</comment>
<comment type="similarity">
    <text evidence="2">Belongs to the glycosyl hydrolase 52 family.</text>
</comment>
<dbReference type="EC" id="3.2.1.37"/>
<dbReference type="EMBL" id="D28121">
    <property type="protein sequence ID" value="BAA05667.1"/>
    <property type="molecule type" value="Genomic_DNA"/>
</dbReference>
<dbReference type="PIR" id="I39759">
    <property type="entry name" value="I39759"/>
</dbReference>
<dbReference type="SMR" id="P45702"/>
<dbReference type="CAZy" id="GH52">
    <property type="family name" value="Glycoside Hydrolase Family 52"/>
</dbReference>
<dbReference type="UniPathway" id="UPA00114"/>
<dbReference type="GO" id="GO:0009044">
    <property type="term" value="F:xylan 1,4-beta-xylosidase activity"/>
    <property type="evidence" value="ECO:0007669"/>
    <property type="project" value="UniProtKB-EC"/>
</dbReference>
<dbReference type="GO" id="GO:0045493">
    <property type="term" value="P:xylan catabolic process"/>
    <property type="evidence" value="ECO:0007669"/>
    <property type="project" value="UniProtKB-UniPathway"/>
</dbReference>
<dbReference type="Gene3D" id="1.50.10.10">
    <property type="match status" value="1"/>
</dbReference>
<dbReference type="InterPro" id="IPR008928">
    <property type="entry name" value="6-hairpin_glycosidase_sf"/>
</dbReference>
<dbReference type="InterPro" id="IPR012341">
    <property type="entry name" value="6hp_glycosidase-like_sf"/>
</dbReference>
<dbReference type="InterPro" id="IPR000852">
    <property type="entry name" value="Glyco_hydro_52"/>
</dbReference>
<dbReference type="Pfam" id="PF03512">
    <property type="entry name" value="Glyco_hydro_52"/>
    <property type="match status" value="1"/>
</dbReference>
<dbReference type="PRINTS" id="PR00845">
    <property type="entry name" value="GLHYDRLASE52"/>
</dbReference>
<dbReference type="SUPFAM" id="SSF48208">
    <property type="entry name" value="Six-hairpin glycosidases"/>
    <property type="match status" value="1"/>
</dbReference>
<protein>
    <recommendedName>
        <fullName>Beta-xylosidase</fullName>
        <ecNumber>3.2.1.37</ecNumber>
    </recommendedName>
    <alternativeName>
        <fullName>1,4-beta-D-xylan xylohydrolase</fullName>
    </alternativeName>
    <alternativeName>
        <fullName>Xylan 1,4-beta-xylosidase</fullName>
    </alternativeName>
</protein>
<proteinExistence type="evidence at protein level"/>
<gene>
    <name type="primary">xylA</name>
</gene>
<reference key="1">
    <citation type="journal article" date="1994" name="Appl. Environ. Microbiol.">
        <title>Identification and characterization of clustered genes for thermostable xylan-degrading enzymes, beta-xylosidase and xylanase, of Bacillus stearothermophilus 21.</title>
        <authorList>
            <person name="Baba T."/>
            <person name="Shinke R."/>
            <person name="Nanmori T."/>
        </authorList>
    </citation>
    <scope>NUCLEOTIDE SEQUENCE [GENOMIC DNA]</scope>
    <scope>PROTEIN SEQUENCE OF 2-7</scope>
    <source>
        <strain>No. 21</strain>
    </source>
</reference>
<organism>
    <name type="scientific">Geobacillus stearothermophilus</name>
    <name type="common">Bacillus stearothermophilus</name>
    <dbReference type="NCBI Taxonomy" id="1422"/>
    <lineage>
        <taxon>Bacteria</taxon>
        <taxon>Bacillati</taxon>
        <taxon>Bacillota</taxon>
        <taxon>Bacilli</taxon>
        <taxon>Bacillales</taxon>
        <taxon>Anoxybacillaceae</taxon>
        <taxon>Geobacillus</taxon>
    </lineage>
</organism>
<sequence length="705" mass="79835">MPTNLFFNAHHSPVGAFASFTLGFPGKSGGLDLELARPPRQNVLIGVESLHESGLYHVLPFLETAEEDESKRYDIENPDPNPQKPNILIPFAKEEIQREFHVATDTWKAGDLTFTIYSPVKAVPNPETADEEELKLALVPAVIVEMTIDNTNGTRARRAFFGFEGTDPYTSMRRIDDTCPQLRGVGQGRILSIVSKDEGVRSALHFSMEDILTAQLEENWTFGLGKVGALIVDVPAGEKKTYQFAVCFYRGGYVTAGMDASYFYTRFFQNIEEVGLYALEQAEVLKEQSFRSNKLIEKEWLSDDQTFMMAHAIRSYYGNTQLLEHEGKPIWVVNEGEYRMMNTFDLTVDQLFFELKLNPWTVKNVLDLYVERYSYEDRVRFPGEETEYPSGISFTHDMGVANTFSRPHYSSYELYGISGCFSHMTHEQLVNWVLCAAVYIEQTKDWAWRDKRLAILEQCLESMVRRDHPDPEQRNGVMGLDSTRTMGGAEITTYDSLDVSLGQARNNLYLAGKCWAAYVALEKLFRDVGKEELAALAGEQAEKCAATIVSHVTDDGYIPAIMGEGNDSKIIPAIEGLVFPYFTNCHEALDENGRFGAYIQALRNHLQYVLREGICLFPDGGWKISSTSNNSWLSKIYLCQFIARHILGWEWDEQGKRADAAHVAWLTHPTLSIWSWSDQIIAGEITGSKYYPRGVTSILWLEEGE</sequence>
<name>XYLA1_GEOSE</name>